<evidence type="ECO:0000250" key="1"/>
<evidence type="ECO:0000250" key="2">
    <source>
        <dbReference type="UniProtKB" id="P31645"/>
    </source>
</evidence>
<evidence type="ECO:0000250" key="3">
    <source>
        <dbReference type="UniProtKB" id="P31652"/>
    </source>
</evidence>
<evidence type="ECO:0000250" key="4">
    <source>
        <dbReference type="UniProtKB" id="Q60857"/>
    </source>
</evidence>
<evidence type="ECO:0000250" key="5">
    <source>
        <dbReference type="UniProtKB" id="Q7K4Y6"/>
    </source>
</evidence>
<evidence type="ECO:0000255" key="6"/>
<evidence type="ECO:0000256" key="7">
    <source>
        <dbReference type="SAM" id="MobiDB-lite"/>
    </source>
</evidence>
<evidence type="ECO:0000269" key="8">
    <source>
    </source>
</evidence>
<evidence type="ECO:0000305" key="9"/>
<evidence type="ECO:0000305" key="10">
    <source>
    </source>
</evidence>
<accession>Q9MYX0</accession>
<proteinExistence type="evidence at transcript level"/>
<dbReference type="EMBL" id="AF285761">
    <property type="protein sequence ID" value="AAF97247.1"/>
    <property type="molecule type" value="mRNA"/>
</dbReference>
<dbReference type="RefSeq" id="NP_001027995.1">
    <property type="nucleotide sequence ID" value="NM_001032823.1"/>
</dbReference>
<dbReference type="RefSeq" id="XP_014974321.1">
    <property type="nucleotide sequence ID" value="XM_015118835.2"/>
</dbReference>
<dbReference type="RefSeq" id="XP_014974322.1">
    <property type="nucleotide sequence ID" value="XM_015118836.2"/>
</dbReference>
<dbReference type="RefSeq" id="XP_028691280.1">
    <property type="nucleotide sequence ID" value="XM_028835447.1"/>
</dbReference>
<dbReference type="SMR" id="Q9MYX0"/>
<dbReference type="FunCoup" id="Q9MYX0">
    <property type="interactions" value="388"/>
</dbReference>
<dbReference type="STRING" id="9544.ENSMMUP00000004679"/>
<dbReference type="BindingDB" id="Q9MYX0"/>
<dbReference type="ChEMBL" id="CHEMBL5453"/>
<dbReference type="GlyCosmos" id="Q9MYX0">
    <property type="glycosylation" value="2 sites, No reported glycans"/>
</dbReference>
<dbReference type="PaxDb" id="9544-ENSMMUP00000004679"/>
<dbReference type="Ensembl" id="ENSMMUT00000004969.4">
    <property type="protein sequence ID" value="ENSMMUP00000004679.3"/>
    <property type="gene ID" value="ENSMMUG00000003515.4"/>
</dbReference>
<dbReference type="GeneID" id="574140"/>
<dbReference type="KEGG" id="mcc:574140"/>
<dbReference type="CTD" id="6532"/>
<dbReference type="VEuPathDB" id="HostDB:ENSMMUG00000003515"/>
<dbReference type="VGNC" id="VGNC:77620">
    <property type="gene designation" value="SLC6A4"/>
</dbReference>
<dbReference type="eggNOG" id="KOG3659">
    <property type="taxonomic scope" value="Eukaryota"/>
</dbReference>
<dbReference type="GeneTree" id="ENSGT00940000157855"/>
<dbReference type="InParanoid" id="Q9MYX0"/>
<dbReference type="OMA" id="GEDCQGN"/>
<dbReference type="OrthoDB" id="6581954at2759"/>
<dbReference type="PRO" id="PR:Q9MYX0"/>
<dbReference type="Proteomes" id="UP000006718">
    <property type="component" value="Chromosome 16"/>
</dbReference>
<dbReference type="Bgee" id="ENSMMUG00000003515">
    <property type="expression patterns" value="Expressed in lung and 10 other cell types or tissues"/>
</dbReference>
<dbReference type="GO" id="GO:0012505">
    <property type="term" value="C:endomembrane system"/>
    <property type="evidence" value="ECO:0000250"/>
    <property type="project" value="UniProtKB"/>
</dbReference>
<dbReference type="GO" id="GO:0010008">
    <property type="term" value="C:endosome membrane"/>
    <property type="evidence" value="ECO:0007669"/>
    <property type="project" value="UniProtKB-SubCell"/>
</dbReference>
<dbReference type="GO" id="GO:0005925">
    <property type="term" value="C:focal adhesion"/>
    <property type="evidence" value="ECO:0000250"/>
    <property type="project" value="UniProtKB"/>
</dbReference>
<dbReference type="GO" id="GO:0045121">
    <property type="term" value="C:membrane raft"/>
    <property type="evidence" value="ECO:0000250"/>
    <property type="project" value="UniProtKB"/>
</dbReference>
<dbReference type="GO" id="GO:0043005">
    <property type="term" value="C:neuron projection"/>
    <property type="evidence" value="ECO:0000318"/>
    <property type="project" value="GO_Central"/>
</dbReference>
<dbReference type="GO" id="GO:0005886">
    <property type="term" value="C:plasma membrane"/>
    <property type="evidence" value="ECO:0000250"/>
    <property type="project" value="UniProtKB"/>
</dbReference>
<dbReference type="GO" id="GO:0098793">
    <property type="term" value="C:presynapse"/>
    <property type="evidence" value="ECO:0007669"/>
    <property type="project" value="GOC"/>
</dbReference>
<dbReference type="GO" id="GO:0045202">
    <property type="term" value="C:synapse"/>
    <property type="evidence" value="ECO:0000250"/>
    <property type="project" value="UniProtKB"/>
</dbReference>
<dbReference type="GO" id="GO:0051015">
    <property type="term" value="F:actin filament binding"/>
    <property type="evidence" value="ECO:0000250"/>
    <property type="project" value="UniProtKB"/>
</dbReference>
<dbReference type="GO" id="GO:0015297">
    <property type="term" value="F:antiporter activity"/>
    <property type="evidence" value="ECO:0007669"/>
    <property type="project" value="UniProtKB-KW"/>
</dbReference>
<dbReference type="GO" id="GO:0042802">
    <property type="term" value="F:identical protein binding"/>
    <property type="evidence" value="ECO:0000250"/>
    <property type="project" value="UniProtKB"/>
</dbReference>
<dbReference type="GO" id="GO:0005178">
    <property type="term" value="F:integrin binding"/>
    <property type="evidence" value="ECO:0000250"/>
    <property type="project" value="UniProtKB"/>
</dbReference>
<dbReference type="GO" id="GO:0005261">
    <property type="term" value="F:monoatomic cation channel activity"/>
    <property type="evidence" value="ECO:0000250"/>
    <property type="project" value="UniProtKB"/>
</dbReference>
<dbReference type="GO" id="GO:0005326">
    <property type="term" value="F:neurotransmitter transmembrane transporter activity"/>
    <property type="evidence" value="ECO:0007669"/>
    <property type="project" value="Ensembl"/>
</dbReference>
<dbReference type="GO" id="GO:0050998">
    <property type="term" value="F:nitric-oxide synthase binding"/>
    <property type="evidence" value="ECO:0007669"/>
    <property type="project" value="Ensembl"/>
</dbReference>
<dbReference type="GO" id="GO:0051378">
    <property type="term" value="F:serotonin binding"/>
    <property type="evidence" value="ECO:0000250"/>
    <property type="project" value="UniProtKB"/>
</dbReference>
<dbReference type="GO" id="GO:0005335">
    <property type="term" value="F:serotonin:sodium:chloride symporter activity"/>
    <property type="evidence" value="ECO:0000314"/>
    <property type="project" value="UniProtKB"/>
</dbReference>
<dbReference type="GO" id="GO:0031402">
    <property type="term" value="F:sodium ion binding"/>
    <property type="evidence" value="ECO:0000250"/>
    <property type="project" value="UniProtKB"/>
</dbReference>
<dbReference type="GO" id="GO:0006865">
    <property type="term" value="P:amino acid transport"/>
    <property type="evidence" value="ECO:0000318"/>
    <property type="project" value="GO_Central"/>
</dbReference>
<dbReference type="GO" id="GO:0048854">
    <property type="term" value="P:brain morphogenesis"/>
    <property type="evidence" value="ECO:0007669"/>
    <property type="project" value="Ensembl"/>
</dbReference>
<dbReference type="GO" id="GO:0048484">
    <property type="term" value="P:enteric nervous system development"/>
    <property type="evidence" value="ECO:0007669"/>
    <property type="project" value="Ensembl"/>
</dbReference>
<dbReference type="GO" id="GO:0051899">
    <property type="term" value="P:membrane depolarization"/>
    <property type="evidence" value="ECO:0000250"/>
    <property type="project" value="UniProtKB"/>
</dbReference>
<dbReference type="GO" id="GO:0046621">
    <property type="term" value="P:negative regulation of organ growth"/>
    <property type="evidence" value="ECO:0007669"/>
    <property type="project" value="Ensembl"/>
</dbReference>
<dbReference type="GO" id="GO:0070527">
    <property type="term" value="P:platelet aggregation"/>
    <property type="evidence" value="ECO:0000250"/>
    <property type="project" value="UniProtKB"/>
</dbReference>
<dbReference type="GO" id="GO:0045787">
    <property type="term" value="P:positive regulation of cell cycle"/>
    <property type="evidence" value="ECO:0007669"/>
    <property type="project" value="Ensembl"/>
</dbReference>
<dbReference type="GO" id="GO:0010628">
    <property type="term" value="P:positive regulation of gene expression"/>
    <property type="evidence" value="ECO:0007669"/>
    <property type="project" value="Ensembl"/>
</dbReference>
<dbReference type="GO" id="GO:0090067">
    <property type="term" value="P:regulation of thalamus size"/>
    <property type="evidence" value="ECO:0000250"/>
    <property type="project" value="UniProtKB"/>
</dbReference>
<dbReference type="GO" id="GO:0009636">
    <property type="term" value="P:response to toxic substance"/>
    <property type="evidence" value="ECO:0007669"/>
    <property type="project" value="Ensembl"/>
</dbReference>
<dbReference type="GO" id="GO:0051610">
    <property type="term" value="P:serotonin uptake"/>
    <property type="evidence" value="ECO:0000318"/>
    <property type="project" value="GO_Central"/>
</dbReference>
<dbReference type="GO" id="GO:0035725">
    <property type="term" value="P:sodium ion transmembrane transport"/>
    <property type="evidence" value="ECO:0000318"/>
    <property type="project" value="GO_Central"/>
</dbReference>
<dbReference type="CDD" id="cd11513">
    <property type="entry name" value="SLC6sbd_SERT"/>
    <property type="match status" value="1"/>
</dbReference>
<dbReference type="InterPro" id="IPR000175">
    <property type="entry name" value="Na/ntran_symport"/>
</dbReference>
<dbReference type="InterPro" id="IPR013086">
    <property type="entry name" value="Na/ntran_symport_serotonin_N"/>
</dbReference>
<dbReference type="InterPro" id="IPR037272">
    <property type="entry name" value="SNS_sf"/>
</dbReference>
<dbReference type="NCBIfam" id="NF037979">
    <property type="entry name" value="Na_transp"/>
    <property type="match status" value="1"/>
</dbReference>
<dbReference type="PANTHER" id="PTHR11616:SF105">
    <property type="entry name" value="SODIUM-DEPENDENT SEROTONIN TRANSPORTER"/>
    <property type="match status" value="1"/>
</dbReference>
<dbReference type="PANTHER" id="PTHR11616">
    <property type="entry name" value="SODIUM/CHLORIDE DEPENDENT TRANSPORTER"/>
    <property type="match status" value="1"/>
</dbReference>
<dbReference type="Pfam" id="PF03491">
    <property type="entry name" value="5HT_transport_N"/>
    <property type="match status" value="1"/>
</dbReference>
<dbReference type="Pfam" id="PF00209">
    <property type="entry name" value="SNF"/>
    <property type="match status" value="1"/>
</dbReference>
<dbReference type="PRINTS" id="PR01203">
    <property type="entry name" value="5HTTRANSPORT"/>
</dbReference>
<dbReference type="PRINTS" id="PR00176">
    <property type="entry name" value="NANEUSMPORT"/>
</dbReference>
<dbReference type="SUPFAM" id="SSF161070">
    <property type="entry name" value="SNF-like"/>
    <property type="match status" value="1"/>
</dbReference>
<dbReference type="PROSITE" id="PS00610">
    <property type="entry name" value="NA_NEUROTRAN_SYMP_1"/>
    <property type="match status" value="1"/>
</dbReference>
<dbReference type="PROSITE" id="PS00754">
    <property type="entry name" value="NA_NEUROTRAN_SYMP_2"/>
    <property type="match status" value="1"/>
</dbReference>
<dbReference type="PROSITE" id="PS50267">
    <property type="entry name" value="NA_NEUROTRAN_SYMP_3"/>
    <property type="match status" value="1"/>
</dbReference>
<name>SC6A4_MACMU</name>
<organism>
    <name type="scientific">Macaca mulatta</name>
    <name type="common">Rhesus macaque</name>
    <dbReference type="NCBI Taxonomy" id="9544"/>
    <lineage>
        <taxon>Eukaryota</taxon>
        <taxon>Metazoa</taxon>
        <taxon>Chordata</taxon>
        <taxon>Craniata</taxon>
        <taxon>Vertebrata</taxon>
        <taxon>Euteleostomi</taxon>
        <taxon>Mammalia</taxon>
        <taxon>Eutheria</taxon>
        <taxon>Euarchontoglires</taxon>
        <taxon>Primates</taxon>
        <taxon>Haplorrhini</taxon>
        <taxon>Catarrhini</taxon>
        <taxon>Cercopithecidae</taxon>
        <taxon>Cercopithecinae</taxon>
        <taxon>Macaca</taxon>
    </lineage>
</organism>
<sequence>METTPLNSQKQLSACKDGEDCQENGVLQKVVPTPGDKVESGQISNGYSAVPSPGAGDDTRHSIPAATTTLVAELHQGERETWGKKVDFLLSVIGYAVDLGNVWRFPYICYQNGGGAFLIPYTIMAIFGGIPLFYMELALGQYHRNGCISIWRKICPIFKGIGYAICIIAFYIASYYNTIMAWALYYLISSFTDQLPWTSCKNSWNTGNCTNYFSEDNITWTLHSTSPAEEFYTRHVLQIHRSKGLQDLGGISWQLALCIMLIFTVIYFSIWKGVKTSGKVVWVTATFPYIILSVLLVRGATLPGAWRGVLFYLKPNWQKLLETGVWIDAAAQIFFSLGPGFGVLLAFASYNKFNNNCYQDALVTSVVNCMTSFVSGFVIFTVLGYMAEMRNEDVSEVAKDAGPSLLFITYAEAIANMPASTFFAIIFFLMLITLGLDSTFAGLEGVITAVLDEFPHIWAKRREWFVLAVVITCFFGSLVTLTFGGAYVVKLLEEYATGPAVLTVALIEAVAVSWFYGITQFCRDVKEMLGFSPGWFWRICWVAISPLFLLFIICSFLMSPPQLRLFQYNYPHWSIILGYCIGTSSFVCIPTYIAYRLISTPGTFKERIIKSITPETPTEIPCGDVRLNAV</sequence>
<protein>
    <recommendedName>
        <fullName>Sodium-dependent serotonin transporter</fullName>
        <shortName evidence="3">SERT</shortName>
    </recommendedName>
    <alternativeName>
        <fullName>5HT transporter</fullName>
        <shortName>5HTT</shortName>
    </alternativeName>
    <alternativeName>
        <fullName>Solute carrier family 6 member 4</fullName>
    </alternativeName>
</protein>
<gene>
    <name type="primary">SLC6A4</name>
</gene>
<reference key="1">
    <citation type="journal article" date="2001" name="Brain Res. Mol. Brain Res.">
        <title>Cloning of dopamine, norepinephrine and serotonin transporters from monkey brain: relevance to cocaine sensitivity.</title>
        <authorList>
            <person name="Miller G.M."/>
            <person name="Yatin S.M."/>
            <person name="De La Garza R. II"/>
            <person name="Goulet M."/>
            <person name="Madras B.K."/>
        </authorList>
    </citation>
    <scope>NUCLEOTIDE SEQUENCE [MRNA]</scope>
    <scope>FUNCTION</scope>
    <scope>TRANSPORTER ACTIVITY</scope>
    <source>
        <tissue>Midbrain</tissue>
    </source>
</reference>
<comment type="function">
    <text evidence="2 3 4 8">Serotonin transporter that cotransports serotonin with one Na(+) ion in exchange for one K(+) ion and possibly one proton in an overall electroneutral transport cycle. Transports serotonin across the plasma membrane from the extracellular compartment to the cytosol thus limiting serotonin intercellular signaling (By similarity) (PubMed:11223167). Essential for serotonin homeostasis in the central nervous system. In the developing somatosensory cortex, acts in glutamatergic neurons to control serotonin uptake and its trophic functions accounting for proper spatial organization of cortical neurons and elaboration of sensory circuits. In the mature cortex, acts primarily in brainstem raphe neurons to mediate serotonin uptake from the synaptic cleft back into the pre-synaptic terminal thus terminating serotonin signaling at the synapse (By similarity). Modulates mucosal serotonin levels in the gastrointestinal tract through uptake and clearance of serotonin in enterocytes. Required for enteric neurogenesis and gastrointestinal reflexes (By similarity). Regulates blood serotonin levels by ensuring rapid high affinity uptake of serotonin from plasma to platelets, where it is further stored in dense granules via vesicular monoamine transporters and then released upon stimulation. Mechanistically, the transport cycle starts with an outward-open conformation having Na1(+) and Cl(-) sites occupied. The binding of a second extracellular Na2(+) ion and serotonin substrate leads to structural changes to outward-occluded to inward-occluded to inward-open, where the Na2(+) ion and serotonin are released into the cytosol. Binding of intracellular K(+) ion induces conformational transitions to inward-occluded to outward-open and completes the cycle by releasing K(+) possibly together with a proton bound to Asp-98 into the extracellular compartment. Na1(+) and Cl(-) ions remain bound throughout the transport cycle (By similarity) (PubMed:11223167). Additionally, displays serotonin-induced channel-like conductance for monovalent cations, mainly Na(+) ions. The channel activity is uncoupled from the transport cycle and may contribute to the membrane resting potential or excitability (By similarity).</text>
</comment>
<comment type="catalytic activity">
    <reaction evidence="2 8">
        <text>serotonin(out) + K(+)(in) + Na(+)(out) + H(+)(in) = serotonin(in) + K(+)(out) + Na(+)(in) + H(+)(out)</text>
        <dbReference type="Rhea" id="RHEA:75839"/>
        <dbReference type="ChEBI" id="CHEBI:15378"/>
        <dbReference type="ChEBI" id="CHEBI:29101"/>
        <dbReference type="ChEBI" id="CHEBI:29103"/>
        <dbReference type="ChEBI" id="CHEBI:350546"/>
    </reaction>
    <physiologicalReaction direction="left-to-right" evidence="2 10">
        <dbReference type="Rhea" id="RHEA:75840"/>
    </physiologicalReaction>
</comment>
<comment type="subunit">
    <text evidence="2 3 4">Monomer or homooligomer (By similarity). Interacts (via C-terminus) with SCAMP2; the interaction is direct and retains transporter molecules intracellularly. Interacts with filamentous actin and STX1A (By similarity). Interacts (via the N-terminus) with STX1A (via the H3 domain); this interaction regulates SLC4A6 channel conductance (By similarity). Interacts with SEC23A, SEC24C and PATJ. Interacts with NOS1; the interaction may diminish the cell surface localization of SERT in the brain and, correspondingly, reduce serotonin reuptake. Interacts with TGFB1I1 (By similarity). Interacts with ITGAV:ITGB3 (By similarity). Interacts (via C-terminus) with ITGB3; this interaction regulates SLC6A4 trafficking (By similarity).</text>
</comment>
<comment type="subcellular location">
    <subcellularLocation>
        <location evidence="2">Cell membrane</location>
        <topology evidence="6">Multi-pass membrane protein</topology>
    </subcellularLocation>
    <subcellularLocation>
        <location evidence="3">Endomembrane system</location>
        <topology evidence="6">Multi-pass membrane protein</topology>
    </subcellularLocation>
    <subcellularLocation>
        <location evidence="3">Endosome membrane</location>
        <topology evidence="6">Multi-pass membrane protein</topology>
    </subcellularLocation>
    <subcellularLocation>
        <location evidence="4">Synapse</location>
    </subcellularLocation>
    <subcellularLocation>
        <location evidence="4">Cell junction</location>
        <location evidence="4">Focal adhesion</location>
    </subcellularLocation>
    <subcellularLocation>
        <location evidence="4">Cell projection</location>
        <location evidence="4">Neuron projection</location>
    </subcellularLocation>
    <text evidence="2 3 4">Could be part of recycling endosomes. Density of transporter molecules on the plasma membrane is itself regulated by STX1A. Density of transporter molecules on the plasma membrane is also regulated by serotonin (By similarity). Density of transporter molecules seems to be modulated by ITGAV:ITGB3 (By similarity).</text>
</comment>
<comment type="PTM">
    <text evidence="2">Phosphorylation at Thr-276 increases 5-HT uptake and is required for cGMP-mediated SERT regulation.</text>
</comment>
<comment type="miscellaneous">
    <text evidence="1">This protein is the target of psychomotor stimulants such as amphetamines or cocaine.</text>
</comment>
<comment type="similarity">
    <text evidence="9">Belongs to the sodium:neurotransmitter symporter (SNF) (TC 2.A.22) family. SLC6A4 subfamily.</text>
</comment>
<feature type="chain" id="PRO_0000214758" description="Sodium-dependent serotonin transporter">
    <location>
        <begin position="1"/>
        <end position="630"/>
    </location>
</feature>
<feature type="topological domain" description="Cytoplasmic" evidence="9">
    <location>
        <begin position="1"/>
        <end position="87"/>
    </location>
</feature>
<feature type="transmembrane region" description="Helical; Name=1" evidence="2">
    <location>
        <begin position="88"/>
        <end position="112"/>
    </location>
</feature>
<feature type="topological domain" description="Extracellular" evidence="9">
    <location>
        <begin position="113"/>
        <end position="115"/>
    </location>
</feature>
<feature type="transmembrane region" description="Helical; Name=2" evidence="2">
    <location>
        <begin position="116"/>
        <end position="135"/>
    </location>
</feature>
<feature type="topological domain" description="Cytoplasmic" evidence="9">
    <location>
        <begin position="136"/>
        <end position="160"/>
    </location>
</feature>
<feature type="transmembrane region" description="Helical; Name=3" evidence="2">
    <location>
        <begin position="161"/>
        <end position="186"/>
    </location>
</feature>
<feature type="topological domain" description="Extracellular" evidence="9">
    <location>
        <begin position="187"/>
        <end position="252"/>
    </location>
</feature>
<feature type="transmembrane region" description="Helical; Name=4" evidence="2">
    <location>
        <begin position="253"/>
        <end position="271"/>
    </location>
</feature>
<feature type="topological domain" description="Cytoplasmic" evidence="9">
    <location>
        <begin position="272"/>
        <end position="277"/>
    </location>
</feature>
<feature type="transmembrane region" description="Helical; Name=5" evidence="2">
    <location>
        <begin position="278"/>
        <end position="297"/>
    </location>
</feature>
<feature type="topological domain" description="Extracellular" evidence="9">
    <location>
        <begin position="298"/>
        <end position="324"/>
    </location>
</feature>
<feature type="transmembrane region" description="Helical; Name=6" evidence="2">
    <location>
        <begin position="325"/>
        <end position="347"/>
    </location>
</feature>
<feature type="topological domain" description="Cytoplasmic" evidence="9">
    <location>
        <begin position="348"/>
        <end position="360"/>
    </location>
</feature>
<feature type="transmembrane region" description="Helical; Name=7" evidence="2">
    <location>
        <begin position="361"/>
        <end position="380"/>
    </location>
</feature>
<feature type="topological domain" description="Extracellular" evidence="9">
    <location>
        <begin position="381"/>
        <end position="421"/>
    </location>
</feature>
<feature type="transmembrane region" description="Helical; Name=8" evidence="2">
    <location>
        <begin position="422"/>
        <end position="443"/>
    </location>
</feature>
<feature type="topological domain" description="Cytoplasmic" evidence="9">
    <location>
        <begin position="444"/>
        <end position="463"/>
    </location>
</feature>
<feature type="transmembrane region" description="Helical; Name=9" evidence="2">
    <location>
        <begin position="464"/>
        <end position="483"/>
    </location>
</feature>
<feature type="topological domain" description="Extracellular" evidence="9">
    <location>
        <begin position="484"/>
        <end position="494"/>
    </location>
</feature>
<feature type="transmembrane region" description="Helical; Name=10" evidence="2">
    <location>
        <begin position="495"/>
        <end position="516"/>
    </location>
</feature>
<feature type="topological domain" description="Cytoplasmic" evidence="9">
    <location>
        <begin position="517"/>
        <end position="538"/>
    </location>
</feature>
<feature type="transmembrane region" description="Helical; Name=11" evidence="2">
    <location>
        <begin position="539"/>
        <end position="558"/>
    </location>
</feature>
<feature type="topological domain" description="Extracellular" evidence="9">
    <location>
        <begin position="559"/>
        <end position="574"/>
    </location>
</feature>
<feature type="transmembrane region" description="Helical; Name=12" evidence="2">
    <location>
        <begin position="575"/>
        <end position="595"/>
    </location>
</feature>
<feature type="topological domain" description="Cytoplasmic" evidence="9">
    <location>
        <begin position="596"/>
        <end position="630"/>
    </location>
</feature>
<feature type="region of interest" description="Disordered" evidence="7">
    <location>
        <begin position="31"/>
        <end position="59"/>
    </location>
</feature>
<feature type="region of interest" description="Interaction with RAB4A" evidence="1">
    <location>
        <begin position="616"/>
        <end position="624"/>
    </location>
</feature>
<feature type="binding site" evidence="5">
    <location>
        <position position="94"/>
    </location>
    <ligand>
        <name>Na(+)</name>
        <dbReference type="ChEBI" id="CHEBI:29101"/>
        <label>1</label>
    </ligand>
</feature>
<feature type="binding site" evidence="5">
    <location>
        <position position="96"/>
    </location>
    <ligand>
        <name>Na(+)</name>
        <dbReference type="ChEBI" id="CHEBI:29101"/>
        <label>2</label>
    </ligand>
</feature>
<feature type="binding site" evidence="5">
    <location>
        <position position="97"/>
    </location>
    <ligand>
        <name>Na(+)</name>
        <dbReference type="ChEBI" id="CHEBI:29101"/>
        <label>1</label>
    </ligand>
</feature>
<feature type="binding site" evidence="2">
    <location>
        <position position="98"/>
    </location>
    <ligand>
        <name>Na(+)</name>
        <dbReference type="ChEBI" id="CHEBI:29101"/>
        <label>2</label>
    </ligand>
</feature>
<feature type="binding site" evidence="2">
    <location>
        <position position="98"/>
    </location>
    <ligand>
        <name>serotonin</name>
        <dbReference type="ChEBI" id="CHEBI:350546"/>
    </ligand>
</feature>
<feature type="binding site" evidence="5">
    <location>
        <position position="101"/>
    </location>
    <ligand>
        <name>Na(+)</name>
        <dbReference type="ChEBI" id="CHEBI:29101"/>
        <label>2</label>
    </ligand>
</feature>
<feature type="binding site" evidence="5">
    <location>
        <position position="336"/>
    </location>
    <ligand>
        <name>Na(+)</name>
        <dbReference type="ChEBI" id="CHEBI:29101"/>
        <label>2</label>
    </ligand>
</feature>
<feature type="binding site" evidence="5">
    <location>
        <position position="368"/>
    </location>
    <ligand>
        <name>Na(+)</name>
        <dbReference type="ChEBI" id="CHEBI:29101"/>
        <label>2</label>
    </ligand>
</feature>
<feature type="binding site" evidence="5">
    <location>
        <position position="434"/>
    </location>
    <ligand>
        <name>Na(+)</name>
        <dbReference type="ChEBI" id="CHEBI:29101"/>
        <label>1</label>
    </ligand>
</feature>
<feature type="binding site" evidence="5">
    <location>
        <position position="437"/>
    </location>
    <ligand>
        <name>Na(+)</name>
        <dbReference type="ChEBI" id="CHEBI:29101"/>
        <label>1</label>
    </ligand>
</feature>
<feature type="binding site" evidence="5">
    <location>
        <position position="438"/>
    </location>
    <ligand>
        <name>Na(+)</name>
        <dbReference type="ChEBI" id="CHEBI:29101"/>
        <label>1</label>
    </ligand>
</feature>
<feature type="binding site" evidence="2">
    <location>
        <position position="439"/>
    </location>
    <ligand>
        <name>serotonin</name>
        <dbReference type="ChEBI" id="CHEBI:350546"/>
    </ligand>
</feature>
<feature type="binding site" evidence="2">
    <location>
        <position position="494"/>
    </location>
    <ligand>
        <name>serotonin</name>
        <dbReference type="ChEBI" id="CHEBI:350546"/>
    </ligand>
</feature>
<feature type="binding site" evidence="2">
    <location>
        <position position="495"/>
    </location>
    <ligand>
        <name>serotonin</name>
        <dbReference type="ChEBI" id="CHEBI:350546"/>
    </ligand>
</feature>
<feature type="binding site" evidence="2">
    <location>
        <position position="556"/>
    </location>
    <ligand>
        <name>serotonin</name>
        <dbReference type="ChEBI" id="CHEBI:350546"/>
    </ligand>
</feature>
<feature type="binding site" evidence="2">
    <location>
        <position position="559"/>
    </location>
    <ligand>
        <name>serotonin</name>
        <dbReference type="ChEBI" id="CHEBI:350546"/>
    </ligand>
</feature>
<feature type="modified residue" description="Phosphotyrosine" evidence="2">
    <location>
        <position position="47"/>
    </location>
</feature>
<feature type="modified residue" description="Phosphotyrosine" evidence="2">
    <location>
        <position position="142"/>
    </location>
</feature>
<feature type="modified residue" description="Phosphothreonine" evidence="2">
    <location>
        <position position="276"/>
    </location>
</feature>
<feature type="glycosylation site" description="N-linked (GlcNAc...) asparagine" evidence="2 6">
    <location>
        <position position="208"/>
    </location>
</feature>
<feature type="glycosylation site" description="N-linked (GlcNAc...) asparagine" evidence="2 6">
    <location>
        <position position="217"/>
    </location>
</feature>
<feature type="disulfide bond" evidence="2">
    <location>
        <begin position="200"/>
        <end position="209"/>
    </location>
</feature>
<keyword id="KW-0050">Antiport</keyword>
<keyword id="KW-0965">Cell junction</keyword>
<keyword id="KW-1003">Cell membrane</keyword>
<keyword id="KW-0966">Cell projection</keyword>
<keyword id="KW-1015">Disulfide bond</keyword>
<keyword id="KW-0967">Endosome</keyword>
<keyword id="KW-0325">Glycoprotein</keyword>
<keyword id="KW-0472">Membrane</keyword>
<keyword id="KW-0479">Metal-binding</keyword>
<keyword id="KW-0532">Neurotransmitter transport</keyword>
<keyword id="KW-0597">Phosphoprotein</keyword>
<keyword id="KW-1185">Reference proteome</keyword>
<keyword id="KW-0915">Sodium</keyword>
<keyword id="KW-0770">Synapse</keyword>
<keyword id="KW-0812">Transmembrane</keyword>
<keyword id="KW-1133">Transmembrane helix</keyword>
<keyword id="KW-0813">Transport</keyword>